<reference key="1">
    <citation type="submission" date="2007-05" db="EMBL/GenBank/DDBJ databases">
        <title>Complete sequence of Pseudomonas putida F1.</title>
        <authorList>
            <consortium name="US DOE Joint Genome Institute"/>
            <person name="Copeland A."/>
            <person name="Lucas S."/>
            <person name="Lapidus A."/>
            <person name="Barry K."/>
            <person name="Detter J.C."/>
            <person name="Glavina del Rio T."/>
            <person name="Hammon N."/>
            <person name="Israni S."/>
            <person name="Dalin E."/>
            <person name="Tice H."/>
            <person name="Pitluck S."/>
            <person name="Chain P."/>
            <person name="Malfatti S."/>
            <person name="Shin M."/>
            <person name="Vergez L."/>
            <person name="Schmutz J."/>
            <person name="Larimer F."/>
            <person name="Land M."/>
            <person name="Hauser L."/>
            <person name="Kyrpides N."/>
            <person name="Lykidis A."/>
            <person name="Parales R."/>
            <person name="Richardson P."/>
        </authorList>
    </citation>
    <scope>NUCLEOTIDE SEQUENCE [LARGE SCALE GENOMIC DNA]</scope>
    <source>
        <strain>ATCC 700007 / DSM 6899 / JCM 31910 / BCRC 17059 / LMG 24140 / F1</strain>
    </source>
</reference>
<accession>A5VXJ0</accession>
<comment type="similarity">
    <text evidence="1">Belongs to the UPF0229 family.</text>
</comment>
<gene>
    <name type="ordered locus">Pput_0430</name>
</gene>
<dbReference type="EMBL" id="CP000712">
    <property type="protein sequence ID" value="ABQ76600.1"/>
    <property type="molecule type" value="Genomic_DNA"/>
</dbReference>
<dbReference type="KEGG" id="ppf:Pput_0430"/>
<dbReference type="eggNOG" id="COG2718">
    <property type="taxonomic scope" value="Bacteria"/>
</dbReference>
<dbReference type="HOGENOM" id="CLU_049702_0_0_6"/>
<dbReference type="HAMAP" id="MF_01232">
    <property type="entry name" value="UPF0229"/>
    <property type="match status" value="1"/>
</dbReference>
<dbReference type="InterPro" id="IPR006698">
    <property type="entry name" value="UPF0229"/>
</dbReference>
<dbReference type="NCBIfam" id="NF003707">
    <property type="entry name" value="PRK05325.1-2"/>
    <property type="match status" value="1"/>
</dbReference>
<dbReference type="NCBIfam" id="NF003708">
    <property type="entry name" value="PRK05325.1-3"/>
    <property type="match status" value="1"/>
</dbReference>
<dbReference type="PANTHER" id="PTHR30510">
    <property type="entry name" value="UPF0229 PROTEIN YEAH"/>
    <property type="match status" value="1"/>
</dbReference>
<dbReference type="PANTHER" id="PTHR30510:SF2">
    <property type="entry name" value="UPF0229 PROTEIN YEAH"/>
    <property type="match status" value="1"/>
</dbReference>
<dbReference type="Pfam" id="PF04285">
    <property type="entry name" value="DUF444"/>
    <property type="match status" value="1"/>
</dbReference>
<organism>
    <name type="scientific">Pseudomonas putida (strain ATCC 700007 / DSM 6899 / JCM 31910 / BCRC 17059 / LMG 24140 / F1)</name>
    <dbReference type="NCBI Taxonomy" id="351746"/>
    <lineage>
        <taxon>Bacteria</taxon>
        <taxon>Pseudomonadati</taxon>
        <taxon>Pseudomonadota</taxon>
        <taxon>Gammaproteobacteria</taxon>
        <taxon>Pseudomonadales</taxon>
        <taxon>Pseudomonadaceae</taxon>
        <taxon>Pseudomonas</taxon>
    </lineage>
</organism>
<evidence type="ECO:0000255" key="1">
    <source>
        <dbReference type="HAMAP-Rule" id="MF_01232"/>
    </source>
</evidence>
<evidence type="ECO:0000256" key="2">
    <source>
        <dbReference type="SAM" id="MobiDB-lite"/>
    </source>
</evidence>
<sequence>MSYVIDRRLNGKNKSTVNRQRFLRRYREHIKKAVEEAVSRRSIMDMEHGEQISIPGRDIDEPVLHHGRGGKQTIVHPGNKEFTAGEHIPRPQGGGGGGGRGKAGNSGEGMDEFVFQITQEEFLEFMFEDLELPNLVKRHLTGADTFKTVRAGIANEGNPSRINIVRTLRSAHARRIALTGSSRALLREAQKELDRLRVEEPDNFTDIQEVEQEIERLKARINRLPFLDTFDLKYNLLVKQPNPSSKAVMFCLMDVSGSMTQATKDIAKRFFILLYLFLKRNYERIEVVFIRHHTSAREVDEEEFFYSRETGGTIVSSALKLMQEIMAERYPASDWNIYAAQASDGDNWNDDSPICRDILSKQIMPHVQYYTYVEITPREHQALWYEYERIGDAFPDTFAQQQLVSAGDIYPVFRELFQRRLAT</sequence>
<protein>
    <recommendedName>
        <fullName evidence="1">UPF0229 protein Pput_0430</fullName>
    </recommendedName>
</protein>
<proteinExistence type="inferred from homology"/>
<name>Y430_PSEP1</name>
<feature type="chain" id="PRO_1000066873" description="UPF0229 protein Pput_0430">
    <location>
        <begin position="1"/>
        <end position="423"/>
    </location>
</feature>
<feature type="region of interest" description="Disordered" evidence="2">
    <location>
        <begin position="81"/>
        <end position="108"/>
    </location>
</feature>
<feature type="compositionally biased region" description="Gly residues" evidence="2">
    <location>
        <begin position="92"/>
        <end position="107"/>
    </location>
</feature>